<name>SP5G_STAHJ</name>
<sequence>MKVTDVRLRKIQTDGRMKALVSITLDEAFVIHDLRVIEGNSGLFVAMPSKRTPDGEFRDIAHPINSDMRQEIQDAVMKVYDETDEVIPDKNASSEDSDEA</sequence>
<keyword id="KW-0131">Cell cycle</keyword>
<keyword id="KW-0132">Cell division</keyword>
<keyword id="KW-0717">Septation</keyword>
<comment type="function">
    <text evidence="1">Could be involved in septation.</text>
</comment>
<comment type="similarity">
    <text evidence="1">Belongs to the SpoVG family.</text>
</comment>
<gene>
    <name evidence="1" type="primary">spoVG</name>
    <name type="ordered locus">SH2513</name>
</gene>
<accession>Q4L3F5</accession>
<proteinExistence type="inferred from homology"/>
<reference key="1">
    <citation type="journal article" date="2005" name="J. Bacteriol.">
        <title>Whole-genome sequencing of Staphylococcus haemolyticus uncovers the extreme plasticity of its genome and the evolution of human-colonizing staphylococcal species.</title>
        <authorList>
            <person name="Takeuchi F."/>
            <person name="Watanabe S."/>
            <person name="Baba T."/>
            <person name="Yuzawa H."/>
            <person name="Ito T."/>
            <person name="Morimoto Y."/>
            <person name="Kuroda M."/>
            <person name="Cui L."/>
            <person name="Takahashi M."/>
            <person name="Ankai A."/>
            <person name="Baba S."/>
            <person name="Fukui S."/>
            <person name="Lee J.C."/>
            <person name="Hiramatsu K."/>
        </authorList>
    </citation>
    <scope>NUCLEOTIDE SEQUENCE [LARGE SCALE GENOMIC DNA]</scope>
    <source>
        <strain>JCSC1435</strain>
    </source>
</reference>
<evidence type="ECO:0000255" key="1">
    <source>
        <dbReference type="HAMAP-Rule" id="MF_00819"/>
    </source>
</evidence>
<dbReference type="EMBL" id="AP006716">
    <property type="protein sequence ID" value="BAE05822.1"/>
    <property type="molecule type" value="Genomic_DNA"/>
</dbReference>
<dbReference type="RefSeq" id="WP_011276763.1">
    <property type="nucleotide sequence ID" value="NC_007168.1"/>
</dbReference>
<dbReference type="SMR" id="Q4L3F5"/>
<dbReference type="GeneID" id="93781742"/>
<dbReference type="KEGG" id="sha:SH2513"/>
<dbReference type="eggNOG" id="COG2088">
    <property type="taxonomic scope" value="Bacteria"/>
</dbReference>
<dbReference type="HOGENOM" id="CLU_103669_2_1_9"/>
<dbReference type="OrthoDB" id="9796286at2"/>
<dbReference type="Proteomes" id="UP000000543">
    <property type="component" value="Chromosome"/>
</dbReference>
<dbReference type="GO" id="GO:0000917">
    <property type="term" value="P:division septum assembly"/>
    <property type="evidence" value="ECO:0007669"/>
    <property type="project" value="UniProtKB-KW"/>
</dbReference>
<dbReference type="GO" id="GO:0030435">
    <property type="term" value="P:sporulation resulting in formation of a cellular spore"/>
    <property type="evidence" value="ECO:0007669"/>
    <property type="project" value="InterPro"/>
</dbReference>
<dbReference type="Gene3D" id="3.30.1120.40">
    <property type="entry name" value="Stage V sporulation protein G"/>
    <property type="match status" value="1"/>
</dbReference>
<dbReference type="HAMAP" id="MF_00819">
    <property type="entry name" value="SpoVG"/>
    <property type="match status" value="1"/>
</dbReference>
<dbReference type="InterPro" id="IPR007170">
    <property type="entry name" value="SpoVG"/>
</dbReference>
<dbReference type="InterPro" id="IPR036751">
    <property type="entry name" value="SpoVG_sf"/>
</dbReference>
<dbReference type="NCBIfam" id="NF009749">
    <property type="entry name" value="PRK13259.1"/>
    <property type="match status" value="1"/>
</dbReference>
<dbReference type="PANTHER" id="PTHR38429">
    <property type="entry name" value="SEPTATION PROTEIN SPOVG-RELATED"/>
    <property type="match status" value="1"/>
</dbReference>
<dbReference type="PANTHER" id="PTHR38429:SF1">
    <property type="entry name" value="SEPTATION PROTEIN SPOVG-RELATED"/>
    <property type="match status" value="1"/>
</dbReference>
<dbReference type="Pfam" id="PF04026">
    <property type="entry name" value="SpoVG"/>
    <property type="match status" value="1"/>
</dbReference>
<dbReference type="SUPFAM" id="SSF160537">
    <property type="entry name" value="SpoVG-like"/>
    <property type="match status" value="1"/>
</dbReference>
<protein>
    <recommendedName>
        <fullName evidence="1">Putative septation protein SpoVG</fullName>
    </recommendedName>
</protein>
<organism>
    <name type="scientific">Staphylococcus haemolyticus (strain JCSC1435)</name>
    <dbReference type="NCBI Taxonomy" id="279808"/>
    <lineage>
        <taxon>Bacteria</taxon>
        <taxon>Bacillati</taxon>
        <taxon>Bacillota</taxon>
        <taxon>Bacilli</taxon>
        <taxon>Bacillales</taxon>
        <taxon>Staphylococcaceae</taxon>
        <taxon>Staphylococcus</taxon>
    </lineage>
</organism>
<feature type="chain" id="PRO_0000157213" description="Putative septation protein SpoVG">
    <location>
        <begin position="1"/>
        <end position="100"/>
    </location>
</feature>